<feature type="chain" id="PRO_1000213159" description="Undecaprenyl-diphosphatase">
    <location>
        <begin position="1"/>
        <end position="265"/>
    </location>
</feature>
<feature type="transmembrane region" description="Helical" evidence="1">
    <location>
        <begin position="41"/>
        <end position="61"/>
    </location>
</feature>
<feature type="transmembrane region" description="Helical" evidence="1">
    <location>
        <begin position="75"/>
        <end position="95"/>
    </location>
</feature>
<feature type="transmembrane region" description="Helical" evidence="1">
    <location>
        <begin position="104"/>
        <end position="124"/>
    </location>
</feature>
<feature type="transmembrane region" description="Helical" evidence="1">
    <location>
        <begin position="137"/>
        <end position="157"/>
    </location>
</feature>
<feature type="transmembrane region" description="Helical" evidence="1">
    <location>
        <begin position="180"/>
        <end position="200"/>
    </location>
</feature>
<feature type="transmembrane region" description="Helical" evidence="1">
    <location>
        <begin position="215"/>
        <end position="235"/>
    </location>
</feature>
<feature type="transmembrane region" description="Helical" evidence="1">
    <location>
        <begin position="244"/>
        <end position="264"/>
    </location>
</feature>
<sequence>MNFLVSILLGIIQGISEWLPISSKTQELIASHYLLGLDVSIAYTFGLFMEMGSIGSALIYFRQDVKRVFHDKFLLKFLVVVTALTGIVGVPLYVISDKLLQNAYNPSIPMIFLGIALIADGIYIRYSRSRTREFKNLSTKEMILIGIAQGIAALPGVSRSGMTVSTMLVLGINPEDAFHYSYLAYIPAAIGSVGTTLLFTRHHISYVVSLIGIDGIALAVISALLTGLVVIGFLLKIAKTKKVYLIDFMLGGIAVLVSMLGLIIS</sequence>
<dbReference type="EC" id="3.6.1.27" evidence="1"/>
<dbReference type="EMBL" id="CP001404">
    <property type="protein sequence ID" value="ACP47394.1"/>
    <property type="molecule type" value="Genomic_DNA"/>
</dbReference>
<dbReference type="RefSeq" id="WP_012717006.1">
    <property type="nucleotide sequence ID" value="NC_012623.1"/>
</dbReference>
<dbReference type="SMR" id="C3NJZ2"/>
<dbReference type="GeneID" id="7808743"/>
<dbReference type="KEGG" id="sin:YN1551_0205"/>
<dbReference type="HOGENOM" id="CLU_060296_1_2_2"/>
<dbReference type="Proteomes" id="UP000006818">
    <property type="component" value="Chromosome"/>
</dbReference>
<dbReference type="GO" id="GO:0005886">
    <property type="term" value="C:plasma membrane"/>
    <property type="evidence" value="ECO:0007669"/>
    <property type="project" value="UniProtKB-SubCell"/>
</dbReference>
<dbReference type="GO" id="GO:0050380">
    <property type="term" value="F:undecaprenyl-diphosphatase activity"/>
    <property type="evidence" value="ECO:0007669"/>
    <property type="project" value="UniProtKB-UniRule"/>
</dbReference>
<dbReference type="HAMAP" id="MF_01006">
    <property type="entry name" value="Undec_diphosphatase"/>
    <property type="match status" value="1"/>
</dbReference>
<dbReference type="InterPro" id="IPR003824">
    <property type="entry name" value="UppP"/>
</dbReference>
<dbReference type="NCBIfam" id="NF001398">
    <property type="entry name" value="PRK00281.3-5"/>
    <property type="match status" value="1"/>
</dbReference>
<dbReference type="PANTHER" id="PTHR30622">
    <property type="entry name" value="UNDECAPRENYL-DIPHOSPHATASE"/>
    <property type="match status" value="1"/>
</dbReference>
<dbReference type="PANTHER" id="PTHR30622:SF2">
    <property type="entry name" value="UNDECAPRENYL-DIPHOSPHATASE"/>
    <property type="match status" value="1"/>
</dbReference>
<dbReference type="Pfam" id="PF02673">
    <property type="entry name" value="BacA"/>
    <property type="match status" value="1"/>
</dbReference>
<comment type="function">
    <text evidence="1">Catalyzes the dephosphorylation of undecaprenyl diphosphate (UPP).</text>
</comment>
<comment type="catalytic activity">
    <reaction evidence="1">
        <text>di-trans,octa-cis-undecaprenyl diphosphate + H2O = di-trans,octa-cis-undecaprenyl phosphate + phosphate + H(+)</text>
        <dbReference type="Rhea" id="RHEA:28094"/>
        <dbReference type="ChEBI" id="CHEBI:15377"/>
        <dbReference type="ChEBI" id="CHEBI:15378"/>
        <dbReference type="ChEBI" id="CHEBI:43474"/>
        <dbReference type="ChEBI" id="CHEBI:58405"/>
        <dbReference type="ChEBI" id="CHEBI:60392"/>
        <dbReference type="EC" id="3.6.1.27"/>
    </reaction>
</comment>
<comment type="subcellular location">
    <subcellularLocation>
        <location evidence="1">Cell membrane</location>
        <topology evidence="1">Multi-pass membrane protein</topology>
    </subcellularLocation>
</comment>
<comment type="similarity">
    <text evidence="1">Belongs to the UppP family.</text>
</comment>
<name>UPPP_SACI1</name>
<keyword id="KW-1003">Cell membrane</keyword>
<keyword id="KW-0378">Hydrolase</keyword>
<keyword id="KW-0472">Membrane</keyword>
<keyword id="KW-0812">Transmembrane</keyword>
<keyword id="KW-1133">Transmembrane helix</keyword>
<accession>C3NJZ2</accession>
<evidence type="ECO:0000255" key="1">
    <source>
        <dbReference type="HAMAP-Rule" id="MF_01006"/>
    </source>
</evidence>
<gene>
    <name evidence="1" type="primary">uppP</name>
    <name type="ordered locus">YN1551_0205</name>
</gene>
<organism>
    <name type="scientific">Saccharolobus islandicus (strain Y.N.15.51 / Yellowstone #2)</name>
    <name type="common">Sulfolobus islandicus</name>
    <dbReference type="NCBI Taxonomy" id="419942"/>
    <lineage>
        <taxon>Archaea</taxon>
        <taxon>Thermoproteota</taxon>
        <taxon>Thermoprotei</taxon>
        <taxon>Sulfolobales</taxon>
        <taxon>Sulfolobaceae</taxon>
        <taxon>Saccharolobus</taxon>
    </lineage>
</organism>
<protein>
    <recommendedName>
        <fullName evidence="1">Undecaprenyl-diphosphatase</fullName>
        <ecNumber evidence="1">3.6.1.27</ecNumber>
    </recommendedName>
    <alternativeName>
        <fullName evidence="1">Undecaprenyl pyrophosphate phosphatase</fullName>
    </alternativeName>
</protein>
<proteinExistence type="inferred from homology"/>
<reference key="1">
    <citation type="journal article" date="2009" name="Proc. Natl. Acad. Sci. U.S.A.">
        <title>Biogeography of the Sulfolobus islandicus pan-genome.</title>
        <authorList>
            <person name="Reno M.L."/>
            <person name="Held N.L."/>
            <person name="Fields C.J."/>
            <person name="Burke P.V."/>
            <person name="Whitaker R.J."/>
        </authorList>
    </citation>
    <scope>NUCLEOTIDE SEQUENCE [LARGE SCALE GENOMIC DNA]</scope>
    <source>
        <strain>Y.N.15.51 / Yellowstone #2</strain>
    </source>
</reference>